<name>RFC2_ARATH</name>
<feature type="initiator methionine" description="Removed" evidence="4">
    <location>
        <position position="1"/>
    </location>
</feature>
<feature type="chain" id="PRO_0000422630" description="Replication factor C subunit 2">
    <location>
        <begin position="2"/>
        <end position="333"/>
    </location>
</feature>
<feature type="binding site" evidence="2">
    <location>
        <begin position="55"/>
        <end position="62"/>
    </location>
    <ligand>
        <name>ATP</name>
        <dbReference type="ChEBI" id="CHEBI:30616"/>
    </ligand>
</feature>
<feature type="modified residue" description="N-acetylalanine" evidence="4">
    <location>
        <position position="2"/>
    </location>
</feature>
<dbReference type="EMBL" id="AC010795">
    <property type="protein sequence ID" value="AAG51618.1"/>
    <property type="molecule type" value="Genomic_DNA"/>
</dbReference>
<dbReference type="EMBL" id="CP002684">
    <property type="protein sequence ID" value="AEE34063.1"/>
    <property type="molecule type" value="Genomic_DNA"/>
</dbReference>
<dbReference type="EMBL" id="BT031353">
    <property type="protein sequence ID" value="ACB88833.1"/>
    <property type="molecule type" value="mRNA"/>
</dbReference>
<dbReference type="PIR" id="B96657">
    <property type="entry name" value="B96657"/>
</dbReference>
<dbReference type="RefSeq" id="NP_176504.1">
    <property type="nucleotide sequence ID" value="NM_104994.4"/>
</dbReference>
<dbReference type="SMR" id="Q9CAM7"/>
<dbReference type="BioGRID" id="27841">
    <property type="interactions" value="7"/>
</dbReference>
<dbReference type="FunCoup" id="Q9CAM7">
    <property type="interactions" value="3002"/>
</dbReference>
<dbReference type="IntAct" id="Q9CAM7">
    <property type="interactions" value="1"/>
</dbReference>
<dbReference type="STRING" id="3702.Q9CAM7"/>
<dbReference type="iPTMnet" id="Q9CAM7"/>
<dbReference type="PaxDb" id="3702-AT1G63160.1"/>
<dbReference type="ProteomicsDB" id="236229"/>
<dbReference type="EnsemblPlants" id="AT1G63160.1">
    <property type="protein sequence ID" value="AT1G63160.1"/>
    <property type="gene ID" value="AT1G63160"/>
</dbReference>
<dbReference type="GeneID" id="842620"/>
<dbReference type="Gramene" id="AT1G63160.1">
    <property type="protein sequence ID" value="AT1G63160.1"/>
    <property type="gene ID" value="AT1G63160"/>
</dbReference>
<dbReference type="KEGG" id="ath:AT1G63160"/>
<dbReference type="Araport" id="AT1G63160"/>
<dbReference type="TAIR" id="AT1G63160">
    <property type="gene designation" value="RFC2"/>
</dbReference>
<dbReference type="eggNOG" id="KOG0991">
    <property type="taxonomic scope" value="Eukaryota"/>
</dbReference>
<dbReference type="HOGENOM" id="CLU_042324_0_1_1"/>
<dbReference type="InParanoid" id="Q9CAM7"/>
<dbReference type="OMA" id="SCNYSSQ"/>
<dbReference type="OrthoDB" id="4199794at2759"/>
<dbReference type="PhylomeDB" id="Q9CAM7"/>
<dbReference type="CD-CODE" id="4299E36E">
    <property type="entry name" value="Nucleolus"/>
</dbReference>
<dbReference type="PRO" id="PR:Q9CAM7"/>
<dbReference type="Proteomes" id="UP000006548">
    <property type="component" value="Chromosome 1"/>
</dbReference>
<dbReference type="ExpressionAtlas" id="Q9CAM7">
    <property type="expression patterns" value="baseline and differential"/>
</dbReference>
<dbReference type="GO" id="GO:0005634">
    <property type="term" value="C:nucleus"/>
    <property type="evidence" value="ECO:0007669"/>
    <property type="project" value="UniProtKB-SubCell"/>
</dbReference>
<dbReference type="GO" id="GO:0005524">
    <property type="term" value="F:ATP binding"/>
    <property type="evidence" value="ECO:0007669"/>
    <property type="project" value="UniProtKB-KW"/>
</dbReference>
<dbReference type="GO" id="GO:0016887">
    <property type="term" value="F:ATP hydrolysis activity"/>
    <property type="evidence" value="ECO:0007669"/>
    <property type="project" value="InterPro"/>
</dbReference>
<dbReference type="GO" id="GO:0003677">
    <property type="term" value="F:DNA binding"/>
    <property type="evidence" value="ECO:0007669"/>
    <property type="project" value="UniProtKB-KW"/>
</dbReference>
<dbReference type="GO" id="GO:0006260">
    <property type="term" value="P:DNA replication"/>
    <property type="evidence" value="ECO:0007669"/>
    <property type="project" value="UniProtKB-KW"/>
</dbReference>
<dbReference type="CDD" id="cd00009">
    <property type="entry name" value="AAA"/>
    <property type="match status" value="1"/>
</dbReference>
<dbReference type="CDD" id="cd18140">
    <property type="entry name" value="HLD_clamp_RFC"/>
    <property type="match status" value="1"/>
</dbReference>
<dbReference type="FunFam" id="1.20.272.10:FF:000009">
    <property type="entry name" value="replication factor C subunit 2"/>
    <property type="match status" value="1"/>
</dbReference>
<dbReference type="FunFam" id="1.10.8.60:FF:000012">
    <property type="entry name" value="Replication factor C subunit 4"/>
    <property type="match status" value="1"/>
</dbReference>
<dbReference type="FunFam" id="3.40.50.300:FF:000107">
    <property type="entry name" value="Replication factor C subunit 4"/>
    <property type="match status" value="1"/>
</dbReference>
<dbReference type="Gene3D" id="1.10.8.60">
    <property type="match status" value="1"/>
</dbReference>
<dbReference type="Gene3D" id="1.20.272.10">
    <property type="match status" value="1"/>
</dbReference>
<dbReference type="Gene3D" id="3.40.50.300">
    <property type="entry name" value="P-loop containing nucleotide triphosphate hydrolases"/>
    <property type="match status" value="1"/>
</dbReference>
<dbReference type="InterPro" id="IPR003593">
    <property type="entry name" value="AAA+_ATPase"/>
</dbReference>
<dbReference type="InterPro" id="IPR003959">
    <property type="entry name" value="ATPase_AAA_core"/>
</dbReference>
<dbReference type="InterPro" id="IPR008921">
    <property type="entry name" value="DNA_pol3_clamp-load_cplx_C"/>
</dbReference>
<dbReference type="InterPro" id="IPR050238">
    <property type="entry name" value="DNA_Rep/Repair_Clamp_Loader"/>
</dbReference>
<dbReference type="InterPro" id="IPR027417">
    <property type="entry name" value="P-loop_NTPase"/>
</dbReference>
<dbReference type="InterPro" id="IPR013748">
    <property type="entry name" value="Rep_factorC_C"/>
</dbReference>
<dbReference type="InterPro" id="IPR047854">
    <property type="entry name" value="RFC_lid"/>
</dbReference>
<dbReference type="NCBIfam" id="NF001679">
    <property type="entry name" value="PRK00440.1"/>
    <property type="match status" value="1"/>
</dbReference>
<dbReference type="PANTHER" id="PTHR11669">
    <property type="entry name" value="REPLICATION FACTOR C / DNA POLYMERASE III GAMMA-TAU SUBUNIT"/>
    <property type="match status" value="1"/>
</dbReference>
<dbReference type="PANTHER" id="PTHR11669:SF5">
    <property type="entry name" value="REPLICATION FACTOR C SUBUNIT 2"/>
    <property type="match status" value="1"/>
</dbReference>
<dbReference type="Pfam" id="PF00004">
    <property type="entry name" value="AAA"/>
    <property type="match status" value="1"/>
</dbReference>
<dbReference type="Pfam" id="PF08542">
    <property type="entry name" value="Rep_fac_C"/>
    <property type="match status" value="1"/>
</dbReference>
<dbReference type="SMART" id="SM00382">
    <property type="entry name" value="AAA"/>
    <property type="match status" value="1"/>
</dbReference>
<dbReference type="SUPFAM" id="SSF52540">
    <property type="entry name" value="P-loop containing nucleoside triphosphate hydrolases"/>
    <property type="match status" value="1"/>
</dbReference>
<dbReference type="SUPFAM" id="SSF48019">
    <property type="entry name" value="post-AAA+ oligomerization domain-like"/>
    <property type="match status" value="1"/>
</dbReference>
<accession>Q9CAM7</accession>
<organism>
    <name type="scientific">Arabidopsis thaliana</name>
    <name type="common">Mouse-ear cress</name>
    <dbReference type="NCBI Taxonomy" id="3702"/>
    <lineage>
        <taxon>Eukaryota</taxon>
        <taxon>Viridiplantae</taxon>
        <taxon>Streptophyta</taxon>
        <taxon>Embryophyta</taxon>
        <taxon>Tracheophyta</taxon>
        <taxon>Spermatophyta</taxon>
        <taxon>Magnoliopsida</taxon>
        <taxon>eudicotyledons</taxon>
        <taxon>Gunneridae</taxon>
        <taxon>Pentapetalae</taxon>
        <taxon>rosids</taxon>
        <taxon>malvids</taxon>
        <taxon>Brassicales</taxon>
        <taxon>Brassicaceae</taxon>
        <taxon>Camelineae</taxon>
        <taxon>Arabidopsis</taxon>
    </lineage>
</organism>
<proteinExistence type="evidence at protein level"/>
<reference key="1">
    <citation type="journal article" date="2000" name="Nature">
        <title>Sequence and analysis of chromosome 1 of the plant Arabidopsis thaliana.</title>
        <authorList>
            <person name="Theologis A."/>
            <person name="Ecker J.R."/>
            <person name="Palm C.J."/>
            <person name="Federspiel N.A."/>
            <person name="Kaul S."/>
            <person name="White O."/>
            <person name="Alonso J."/>
            <person name="Altafi H."/>
            <person name="Araujo R."/>
            <person name="Bowman C.L."/>
            <person name="Brooks S.Y."/>
            <person name="Buehler E."/>
            <person name="Chan A."/>
            <person name="Chao Q."/>
            <person name="Chen H."/>
            <person name="Cheuk R.F."/>
            <person name="Chin C.W."/>
            <person name="Chung M.K."/>
            <person name="Conn L."/>
            <person name="Conway A.B."/>
            <person name="Conway A.R."/>
            <person name="Creasy T.H."/>
            <person name="Dewar K."/>
            <person name="Dunn P."/>
            <person name="Etgu P."/>
            <person name="Feldblyum T.V."/>
            <person name="Feng J.-D."/>
            <person name="Fong B."/>
            <person name="Fujii C.Y."/>
            <person name="Gill J.E."/>
            <person name="Goldsmith A.D."/>
            <person name="Haas B."/>
            <person name="Hansen N.F."/>
            <person name="Hughes B."/>
            <person name="Huizar L."/>
            <person name="Hunter J.L."/>
            <person name="Jenkins J."/>
            <person name="Johnson-Hopson C."/>
            <person name="Khan S."/>
            <person name="Khaykin E."/>
            <person name="Kim C.J."/>
            <person name="Koo H.L."/>
            <person name="Kremenetskaia I."/>
            <person name="Kurtz D.B."/>
            <person name="Kwan A."/>
            <person name="Lam B."/>
            <person name="Langin-Hooper S."/>
            <person name="Lee A."/>
            <person name="Lee J.M."/>
            <person name="Lenz C.A."/>
            <person name="Li J.H."/>
            <person name="Li Y.-P."/>
            <person name="Lin X."/>
            <person name="Liu S.X."/>
            <person name="Liu Z.A."/>
            <person name="Luros J.S."/>
            <person name="Maiti R."/>
            <person name="Marziali A."/>
            <person name="Militscher J."/>
            <person name="Miranda M."/>
            <person name="Nguyen M."/>
            <person name="Nierman W.C."/>
            <person name="Osborne B.I."/>
            <person name="Pai G."/>
            <person name="Peterson J."/>
            <person name="Pham P.K."/>
            <person name="Rizzo M."/>
            <person name="Rooney T."/>
            <person name="Rowley D."/>
            <person name="Sakano H."/>
            <person name="Salzberg S.L."/>
            <person name="Schwartz J.R."/>
            <person name="Shinn P."/>
            <person name="Southwick A.M."/>
            <person name="Sun H."/>
            <person name="Tallon L.J."/>
            <person name="Tambunga G."/>
            <person name="Toriumi M.J."/>
            <person name="Town C.D."/>
            <person name="Utterback T."/>
            <person name="Van Aken S."/>
            <person name="Vaysberg M."/>
            <person name="Vysotskaia V.S."/>
            <person name="Walker M."/>
            <person name="Wu D."/>
            <person name="Yu G."/>
            <person name="Fraser C.M."/>
            <person name="Venter J.C."/>
            <person name="Davis R.W."/>
        </authorList>
    </citation>
    <scope>NUCLEOTIDE SEQUENCE [LARGE SCALE GENOMIC DNA]</scope>
    <source>
        <strain>cv. Columbia</strain>
    </source>
</reference>
<reference key="2">
    <citation type="journal article" date="2017" name="Plant J.">
        <title>Araport11: a complete reannotation of the Arabidopsis thaliana reference genome.</title>
        <authorList>
            <person name="Cheng C.Y."/>
            <person name="Krishnakumar V."/>
            <person name="Chan A.P."/>
            <person name="Thibaud-Nissen F."/>
            <person name="Schobel S."/>
            <person name="Town C.D."/>
        </authorList>
    </citation>
    <scope>GENOME REANNOTATION</scope>
    <source>
        <strain>cv. Columbia</strain>
    </source>
</reference>
<reference key="3">
    <citation type="submission" date="2008-04" db="EMBL/GenBank/DDBJ databases">
        <title>Arabidopsis ORF clones.</title>
        <authorList>
            <person name="De Los Reyes C."/>
            <person name="Quan R."/>
            <person name="Chen H."/>
            <person name="Bautista V.R."/>
            <person name="Kim C.J."/>
            <person name="Ecker J.R."/>
        </authorList>
    </citation>
    <scope>NUCLEOTIDE SEQUENCE [LARGE SCALE MRNA]</scope>
    <source>
        <strain>cv. Columbia</strain>
    </source>
</reference>
<reference key="4">
    <citation type="journal article" date="2012" name="Mol. Cell. Proteomics">
        <title>Comparative large-scale characterisation of plant vs. mammal proteins reveals similar and idiosyncratic N-alpha acetylation features.</title>
        <authorList>
            <person name="Bienvenut W.V."/>
            <person name="Sumpton D."/>
            <person name="Martinez A."/>
            <person name="Lilla S."/>
            <person name="Espagne C."/>
            <person name="Meinnel T."/>
            <person name="Giglione C."/>
        </authorList>
    </citation>
    <scope>ACETYLATION [LARGE SCALE ANALYSIS] AT ALA-2</scope>
    <scope>CLEAVAGE OF INITIATOR METHIONINE [LARGE SCALE ANALYSIS]</scope>
    <scope>IDENTIFICATION BY MASS SPECTROMETRY [LARGE SCALE ANALYSIS]</scope>
</reference>
<keyword id="KW-0007">Acetylation</keyword>
<keyword id="KW-0067">ATP-binding</keyword>
<keyword id="KW-0235">DNA replication</keyword>
<keyword id="KW-0238">DNA-binding</keyword>
<keyword id="KW-0547">Nucleotide-binding</keyword>
<keyword id="KW-0539">Nucleus</keyword>
<keyword id="KW-1185">Reference proteome</keyword>
<evidence type="ECO:0000250" key="1"/>
<evidence type="ECO:0000255" key="2"/>
<evidence type="ECO:0000305" key="3"/>
<evidence type="ECO:0007744" key="4">
    <source>
    </source>
</evidence>
<gene>
    <name type="primary">RFC2</name>
    <name type="synonym">EMB2811</name>
    <name type="ordered locus">At1g63160</name>
    <name type="ORF">F16M19.6</name>
</gene>
<sequence length="333" mass="36747">MASSSSTSTGDGYNEPWVEKYRPSKVVDIVGNEDAVSRLQVIARDGNMPNLILSGPPGTGKTTSILALAHELLGTNYKEAVLELNASDDRGIDVVRNKIKMFAQKKVTLPPGRHKVVILDEADSMTSGAQQALRRTIEIYSNSTRFALACNTSAKIIEPIQSRCALVRFSRLSDQQILGRLLVVVAAEKVPYVPEGLEAIIFTADGDMRQALNNLQATFSGFSFVNQENVFKVCDQPHPLHVKNIVRNVLESKFDIACDGLKQLYDLGYSPTDIITTLFRIIKNYDMAEYLKLEFMKETGFAHMRICDGVGSYLQLCGLLAKLSIVRETAKAP</sequence>
<protein>
    <recommendedName>
        <fullName>Replication factor C subunit 2</fullName>
        <shortName>AtRFC2</shortName>
    </recommendedName>
    <alternativeName>
        <fullName>Activator 1 subunit 2</fullName>
    </alternativeName>
    <alternativeName>
        <fullName>Protein EMBRYO DEFECTIVE 2811</fullName>
    </alternativeName>
</protein>
<comment type="function">
    <text evidence="1">May be involved in DNA replication and thus regulate cell proliferation.</text>
</comment>
<comment type="subunit">
    <text evidence="1">Heterotetramer of subunits RFC2, RFC3, RFC4 and RFC5 that can form a complex with RFC1.</text>
</comment>
<comment type="interaction">
    <interactant intactId="EBI-25513796">
        <id>Q9CAM7</id>
    </interactant>
    <interactant intactId="EBI-25513346">
        <id>Q9CAQ8</id>
        <label>RFC5</label>
    </interactant>
    <organismsDiffer>false</organismsDiffer>
    <experiments>3</experiments>
</comment>
<comment type="subcellular location">
    <subcellularLocation>
        <location evidence="1">Nucleus</location>
    </subcellularLocation>
</comment>
<comment type="similarity">
    <text evidence="3">Belongs to the activator 1 small subunits family.</text>
</comment>